<protein>
    <recommendedName>
        <fullName evidence="1">Large ribosomal subunit protein bL34</fullName>
    </recommendedName>
    <alternativeName>
        <fullName evidence="2">50S ribosomal protein L34</fullName>
    </alternativeName>
</protein>
<reference key="1">
    <citation type="submission" date="2008-01" db="EMBL/GenBank/DDBJ databases">
        <title>Complete sequence of Pseudomonas putida GB-1.</title>
        <authorList>
            <consortium name="US DOE Joint Genome Institute"/>
            <person name="Copeland A."/>
            <person name="Lucas S."/>
            <person name="Lapidus A."/>
            <person name="Barry K."/>
            <person name="Glavina del Rio T."/>
            <person name="Dalin E."/>
            <person name="Tice H."/>
            <person name="Pitluck S."/>
            <person name="Bruce D."/>
            <person name="Goodwin L."/>
            <person name="Chertkov O."/>
            <person name="Brettin T."/>
            <person name="Detter J.C."/>
            <person name="Han C."/>
            <person name="Kuske C.R."/>
            <person name="Schmutz J."/>
            <person name="Larimer F."/>
            <person name="Land M."/>
            <person name="Hauser L."/>
            <person name="Kyrpides N."/>
            <person name="Kim E."/>
            <person name="McCarthy J.K."/>
            <person name="Richardson P."/>
        </authorList>
    </citation>
    <scope>NUCLEOTIDE SEQUENCE [LARGE SCALE GENOMIC DNA]</scope>
    <source>
        <strain>GB-1</strain>
    </source>
</reference>
<accession>B0KEU8</accession>
<proteinExistence type="inferred from homology"/>
<comment type="similarity">
    <text evidence="1">Belongs to the bacterial ribosomal protein bL34 family.</text>
</comment>
<organism>
    <name type="scientific">Pseudomonas putida (strain GB-1)</name>
    <dbReference type="NCBI Taxonomy" id="76869"/>
    <lineage>
        <taxon>Bacteria</taxon>
        <taxon>Pseudomonadati</taxon>
        <taxon>Pseudomonadota</taxon>
        <taxon>Gammaproteobacteria</taxon>
        <taxon>Pseudomonadales</taxon>
        <taxon>Pseudomonadaceae</taxon>
        <taxon>Pseudomonas</taxon>
    </lineage>
</organism>
<keyword id="KW-0687">Ribonucleoprotein</keyword>
<keyword id="KW-0689">Ribosomal protein</keyword>
<feature type="chain" id="PRO_1000080261" description="Large ribosomal subunit protein bL34">
    <location>
        <begin position="1"/>
        <end position="44"/>
    </location>
</feature>
<name>RL34_PSEPG</name>
<gene>
    <name evidence="1" type="primary">rpmH</name>
    <name type="ordered locus">PputGB1_0002</name>
</gene>
<dbReference type="EMBL" id="CP000926">
    <property type="protein sequence ID" value="ABY95918.1"/>
    <property type="molecule type" value="Genomic_DNA"/>
</dbReference>
<dbReference type="RefSeq" id="WP_003253163.1">
    <property type="nucleotide sequence ID" value="NC_010322.1"/>
</dbReference>
<dbReference type="SMR" id="B0KEU8"/>
<dbReference type="GeneID" id="97170756"/>
<dbReference type="KEGG" id="ppg:PputGB1_0002"/>
<dbReference type="eggNOG" id="COG0230">
    <property type="taxonomic scope" value="Bacteria"/>
</dbReference>
<dbReference type="HOGENOM" id="CLU_129938_2_0_6"/>
<dbReference type="Proteomes" id="UP000002157">
    <property type="component" value="Chromosome"/>
</dbReference>
<dbReference type="GO" id="GO:1990904">
    <property type="term" value="C:ribonucleoprotein complex"/>
    <property type="evidence" value="ECO:0007669"/>
    <property type="project" value="UniProtKB-KW"/>
</dbReference>
<dbReference type="GO" id="GO:0005840">
    <property type="term" value="C:ribosome"/>
    <property type="evidence" value="ECO:0007669"/>
    <property type="project" value="UniProtKB-KW"/>
</dbReference>
<dbReference type="GO" id="GO:0003735">
    <property type="term" value="F:structural constituent of ribosome"/>
    <property type="evidence" value="ECO:0007669"/>
    <property type="project" value="InterPro"/>
</dbReference>
<dbReference type="GO" id="GO:0006412">
    <property type="term" value="P:translation"/>
    <property type="evidence" value="ECO:0007669"/>
    <property type="project" value="UniProtKB-UniRule"/>
</dbReference>
<dbReference type="FunFam" id="1.10.287.3980:FF:000001">
    <property type="entry name" value="Mitochondrial ribosomal protein L34"/>
    <property type="match status" value="1"/>
</dbReference>
<dbReference type="Gene3D" id="1.10.287.3980">
    <property type="match status" value="1"/>
</dbReference>
<dbReference type="HAMAP" id="MF_00391">
    <property type="entry name" value="Ribosomal_bL34"/>
    <property type="match status" value="1"/>
</dbReference>
<dbReference type="InterPro" id="IPR000271">
    <property type="entry name" value="Ribosomal_bL34"/>
</dbReference>
<dbReference type="InterPro" id="IPR020939">
    <property type="entry name" value="Ribosomal_bL34_CS"/>
</dbReference>
<dbReference type="NCBIfam" id="TIGR01030">
    <property type="entry name" value="rpmH_bact"/>
    <property type="match status" value="1"/>
</dbReference>
<dbReference type="PANTHER" id="PTHR14503:SF4">
    <property type="entry name" value="LARGE RIBOSOMAL SUBUNIT PROTEIN BL34M"/>
    <property type="match status" value="1"/>
</dbReference>
<dbReference type="PANTHER" id="PTHR14503">
    <property type="entry name" value="MITOCHONDRIAL RIBOSOMAL PROTEIN 34 FAMILY MEMBER"/>
    <property type="match status" value="1"/>
</dbReference>
<dbReference type="Pfam" id="PF00468">
    <property type="entry name" value="Ribosomal_L34"/>
    <property type="match status" value="1"/>
</dbReference>
<dbReference type="PROSITE" id="PS00784">
    <property type="entry name" value="RIBOSOMAL_L34"/>
    <property type="match status" value="1"/>
</dbReference>
<sequence length="44" mass="5138">MKRTFQPSTIKRARTHGFRARMATKNGRAVLSRRRAKGRKRLAI</sequence>
<evidence type="ECO:0000255" key="1">
    <source>
        <dbReference type="HAMAP-Rule" id="MF_00391"/>
    </source>
</evidence>
<evidence type="ECO:0000305" key="2"/>